<name>DNLJ_GLUDA</name>
<gene>
    <name evidence="1" type="primary">ligA</name>
    <name type="ordered locus">GDI3200</name>
    <name type="ordered locus">Gdia_3160</name>
</gene>
<reference key="1">
    <citation type="journal article" date="2009" name="BMC Genomics">
        <title>Complete genome sequence of the sugarcane nitrogen-fixing endophyte Gluconacetobacter diazotrophicus Pal5.</title>
        <authorList>
            <person name="Bertalan M."/>
            <person name="Albano R."/>
            <person name="de Padua V."/>
            <person name="Rouws L."/>
            <person name="Rojas C."/>
            <person name="Hemerly A."/>
            <person name="Teixeira K."/>
            <person name="Schwab S."/>
            <person name="Araujo J."/>
            <person name="Oliveira A."/>
            <person name="Franca L."/>
            <person name="Magalhaes V."/>
            <person name="Alqueres S."/>
            <person name="Cardoso A."/>
            <person name="Almeida W."/>
            <person name="Loureiro M.M."/>
            <person name="Nogueira E."/>
            <person name="Cidade D."/>
            <person name="Oliveira D."/>
            <person name="Simao T."/>
            <person name="Macedo J."/>
            <person name="Valadao A."/>
            <person name="Dreschsel M."/>
            <person name="Freitas F."/>
            <person name="Vidal M."/>
            <person name="Guedes H."/>
            <person name="Rodrigues E."/>
            <person name="Meneses C."/>
            <person name="Brioso P."/>
            <person name="Pozzer L."/>
            <person name="Figueiredo D."/>
            <person name="Montano H."/>
            <person name="Junior J."/>
            <person name="de Souza Filho G."/>
            <person name="Martin Quintana Flores V."/>
            <person name="Ferreira B."/>
            <person name="Branco A."/>
            <person name="Gonzalez P."/>
            <person name="Guillobel H."/>
            <person name="Lemos M."/>
            <person name="Seibel L."/>
            <person name="Macedo J."/>
            <person name="Alves-Ferreira M."/>
            <person name="Sachetto-Martins G."/>
            <person name="Coelho A."/>
            <person name="Santos E."/>
            <person name="Amaral G."/>
            <person name="Neves A."/>
            <person name="Pacheco A.B."/>
            <person name="Carvalho D."/>
            <person name="Lery L."/>
            <person name="Bisch P."/>
            <person name="Rossle S.C."/>
            <person name="Urmenyi T."/>
            <person name="Rael Pereira A."/>
            <person name="Silva R."/>
            <person name="Rondinelli E."/>
            <person name="von Kruger W."/>
            <person name="Martins O."/>
            <person name="Baldani J.I."/>
            <person name="Ferreira P.C."/>
        </authorList>
    </citation>
    <scope>NUCLEOTIDE SEQUENCE [LARGE SCALE GENOMIC DNA]</scope>
    <source>
        <strain>ATCC 49037 / DSM 5601 / CCUG 37298 / CIP 103539 / LMG 7603 / PAl5</strain>
    </source>
</reference>
<reference key="2">
    <citation type="journal article" date="2010" name="Stand. Genomic Sci.">
        <title>Two genome sequences of the same bacterial strain, Gluconacetobacter diazotrophicus PAl 5, suggest a new standard in genome sequence submission.</title>
        <authorList>
            <person name="Giongo A."/>
            <person name="Tyler H.L."/>
            <person name="Zipperer U.N."/>
            <person name="Triplett E.W."/>
        </authorList>
    </citation>
    <scope>NUCLEOTIDE SEQUENCE [LARGE SCALE GENOMIC DNA]</scope>
    <source>
        <strain>ATCC 49037 / DSM 5601 / CCUG 37298 / CIP 103539 / LMG 7603 / PAl5</strain>
    </source>
</reference>
<evidence type="ECO:0000255" key="1">
    <source>
        <dbReference type="HAMAP-Rule" id="MF_01588"/>
    </source>
</evidence>
<evidence type="ECO:0000305" key="2"/>
<organism>
    <name type="scientific">Gluconacetobacter diazotrophicus (strain ATCC 49037 / DSM 5601 / CCUG 37298 / CIP 103539 / LMG 7603 / PAl5)</name>
    <dbReference type="NCBI Taxonomy" id="272568"/>
    <lineage>
        <taxon>Bacteria</taxon>
        <taxon>Pseudomonadati</taxon>
        <taxon>Pseudomonadota</taxon>
        <taxon>Alphaproteobacteria</taxon>
        <taxon>Acetobacterales</taxon>
        <taxon>Acetobacteraceae</taxon>
        <taxon>Gluconacetobacter</taxon>
    </lineage>
</organism>
<protein>
    <recommendedName>
        <fullName evidence="1">DNA ligase</fullName>
        <ecNumber evidence="1">6.5.1.2</ecNumber>
    </recommendedName>
    <alternativeName>
        <fullName evidence="1">Polydeoxyribonucleotide synthase [NAD(+)]</fullName>
    </alternativeName>
</protein>
<proteinExistence type="inferred from homology"/>
<keyword id="KW-0227">DNA damage</keyword>
<keyword id="KW-0234">DNA repair</keyword>
<keyword id="KW-0235">DNA replication</keyword>
<keyword id="KW-0436">Ligase</keyword>
<keyword id="KW-0460">Magnesium</keyword>
<keyword id="KW-0464">Manganese</keyword>
<keyword id="KW-0479">Metal-binding</keyword>
<keyword id="KW-0520">NAD</keyword>
<keyword id="KW-1185">Reference proteome</keyword>
<keyword id="KW-0862">Zinc</keyword>
<comment type="function">
    <text evidence="1">DNA ligase that catalyzes the formation of phosphodiester linkages between 5'-phosphoryl and 3'-hydroxyl groups in double-stranded DNA using NAD as a coenzyme and as the energy source for the reaction. It is essential for DNA replication and repair of damaged DNA.</text>
</comment>
<comment type="catalytic activity">
    <reaction evidence="1">
        <text>NAD(+) + (deoxyribonucleotide)n-3'-hydroxyl + 5'-phospho-(deoxyribonucleotide)m = (deoxyribonucleotide)n+m + AMP + beta-nicotinamide D-nucleotide.</text>
        <dbReference type="EC" id="6.5.1.2"/>
    </reaction>
</comment>
<comment type="cofactor">
    <cofactor evidence="1">
        <name>Mg(2+)</name>
        <dbReference type="ChEBI" id="CHEBI:18420"/>
    </cofactor>
    <cofactor evidence="1">
        <name>Mn(2+)</name>
        <dbReference type="ChEBI" id="CHEBI:29035"/>
    </cofactor>
</comment>
<comment type="similarity">
    <text evidence="1">Belongs to the NAD-dependent DNA ligase family. LigA subfamily.</text>
</comment>
<comment type="sequence caution" evidence="2">
    <conflict type="erroneous initiation">
        <sequence resource="EMBL-CDS" id="ACI52890"/>
    </conflict>
</comment>
<feature type="chain" id="PRO_0000340354" description="DNA ligase">
    <location>
        <begin position="1"/>
        <end position="695"/>
    </location>
</feature>
<feature type="domain" description="BRCT" evidence="1">
    <location>
        <begin position="612"/>
        <end position="695"/>
    </location>
</feature>
<feature type="active site" description="N6-AMP-lysine intermediate" evidence="1">
    <location>
        <position position="126"/>
    </location>
</feature>
<feature type="binding site" evidence="1">
    <location>
        <begin position="39"/>
        <end position="43"/>
    </location>
    <ligand>
        <name>NAD(+)</name>
        <dbReference type="ChEBI" id="CHEBI:57540"/>
    </ligand>
</feature>
<feature type="binding site" evidence="1">
    <location>
        <begin position="88"/>
        <end position="89"/>
    </location>
    <ligand>
        <name>NAD(+)</name>
        <dbReference type="ChEBI" id="CHEBI:57540"/>
    </ligand>
</feature>
<feature type="binding site" evidence="1">
    <location>
        <position position="124"/>
    </location>
    <ligand>
        <name>NAD(+)</name>
        <dbReference type="ChEBI" id="CHEBI:57540"/>
    </ligand>
</feature>
<feature type="binding site" evidence="1">
    <location>
        <position position="147"/>
    </location>
    <ligand>
        <name>NAD(+)</name>
        <dbReference type="ChEBI" id="CHEBI:57540"/>
    </ligand>
</feature>
<feature type="binding site" evidence="1">
    <location>
        <position position="183"/>
    </location>
    <ligand>
        <name>NAD(+)</name>
        <dbReference type="ChEBI" id="CHEBI:57540"/>
    </ligand>
</feature>
<feature type="binding site" evidence="1">
    <location>
        <position position="299"/>
    </location>
    <ligand>
        <name>NAD(+)</name>
        <dbReference type="ChEBI" id="CHEBI:57540"/>
    </ligand>
</feature>
<feature type="binding site" evidence="1">
    <location>
        <position position="323"/>
    </location>
    <ligand>
        <name>NAD(+)</name>
        <dbReference type="ChEBI" id="CHEBI:57540"/>
    </ligand>
</feature>
<feature type="binding site" evidence="1">
    <location>
        <position position="419"/>
    </location>
    <ligand>
        <name>Zn(2+)</name>
        <dbReference type="ChEBI" id="CHEBI:29105"/>
    </ligand>
</feature>
<feature type="binding site" evidence="1">
    <location>
        <position position="422"/>
    </location>
    <ligand>
        <name>Zn(2+)</name>
        <dbReference type="ChEBI" id="CHEBI:29105"/>
    </ligand>
</feature>
<feature type="binding site" evidence="1">
    <location>
        <position position="437"/>
    </location>
    <ligand>
        <name>Zn(2+)</name>
        <dbReference type="ChEBI" id="CHEBI:29105"/>
    </ligand>
</feature>
<feature type="binding site" evidence="1">
    <location>
        <position position="443"/>
    </location>
    <ligand>
        <name>Zn(2+)</name>
        <dbReference type="ChEBI" id="CHEBI:29105"/>
    </ligand>
</feature>
<feature type="sequence conflict" description="In Ref. 2; ACI52890." evidence="2" ref="2">
    <original>D</original>
    <variation>N</variation>
    <location>
        <position position="337"/>
    </location>
</feature>
<accession>A9H0L6</accession>
<accession>B5ZJT8</accession>
<dbReference type="EC" id="6.5.1.2" evidence="1"/>
<dbReference type="EMBL" id="AM889285">
    <property type="protein sequence ID" value="CAP57143.1"/>
    <property type="molecule type" value="Genomic_DNA"/>
</dbReference>
<dbReference type="EMBL" id="CP001189">
    <property type="protein sequence ID" value="ACI52890.1"/>
    <property type="status" value="ALT_INIT"/>
    <property type="molecule type" value="Genomic_DNA"/>
</dbReference>
<dbReference type="RefSeq" id="WP_012554790.1">
    <property type="nucleotide sequence ID" value="NC_011365.1"/>
</dbReference>
<dbReference type="SMR" id="A9H0L6"/>
<dbReference type="STRING" id="272568.GDI3200"/>
<dbReference type="KEGG" id="gdi:GDI3200"/>
<dbReference type="KEGG" id="gdj:Gdia_3160"/>
<dbReference type="eggNOG" id="COG0272">
    <property type="taxonomic scope" value="Bacteria"/>
</dbReference>
<dbReference type="HOGENOM" id="CLU_007764_2_1_5"/>
<dbReference type="Proteomes" id="UP000001176">
    <property type="component" value="Chromosome"/>
</dbReference>
<dbReference type="GO" id="GO:0005829">
    <property type="term" value="C:cytosol"/>
    <property type="evidence" value="ECO:0007669"/>
    <property type="project" value="TreeGrafter"/>
</dbReference>
<dbReference type="GO" id="GO:0003911">
    <property type="term" value="F:DNA ligase (NAD+) activity"/>
    <property type="evidence" value="ECO:0007669"/>
    <property type="project" value="UniProtKB-UniRule"/>
</dbReference>
<dbReference type="GO" id="GO:0046872">
    <property type="term" value="F:metal ion binding"/>
    <property type="evidence" value="ECO:0007669"/>
    <property type="project" value="UniProtKB-KW"/>
</dbReference>
<dbReference type="GO" id="GO:0006281">
    <property type="term" value="P:DNA repair"/>
    <property type="evidence" value="ECO:0007669"/>
    <property type="project" value="UniProtKB-KW"/>
</dbReference>
<dbReference type="GO" id="GO:0006260">
    <property type="term" value="P:DNA replication"/>
    <property type="evidence" value="ECO:0007669"/>
    <property type="project" value="UniProtKB-KW"/>
</dbReference>
<dbReference type="CDD" id="cd17748">
    <property type="entry name" value="BRCT_DNA_ligase_like"/>
    <property type="match status" value="1"/>
</dbReference>
<dbReference type="CDD" id="cd00114">
    <property type="entry name" value="LIGANc"/>
    <property type="match status" value="1"/>
</dbReference>
<dbReference type="FunFam" id="2.40.50.140:FF:000012">
    <property type="entry name" value="DNA ligase"/>
    <property type="match status" value="1"/>
</dbReference>
<dbReference type="FunFam" id="3.30.470.30:FF:000001">
    <property type="entry name" value="DNA ligase"/>
    <property type="match status" value="1"/>
</dbReference>
<dbReference type="Gene3D" id="6.20.10.30">
    <property type="match status" value="1"/>
</dbReference>
<dbReference type="Gene3D" id="1.10.150.20">
    <property type="entry name" value="5' to 3' exonuclease, C-terminal subdomain"/>
    <property type="match status" value="2"/>
</dbReference>
<dbReference type="Gene3D" id="3.40.50.10190">
    <property type="entry name" value="BRCT domain"/>
    <property type="match status" value="1"/>
</dbReference>
<dbReference type="Gene3D" id="3.30.470.30">
    <property type="entry name" value="DNA ligase/mRNA capping enzyme"/>
    <property type="match status" value="1"/>
</dbReference>
<dbReference type="Gene3D" id="1.10.287.610">
    <property type="entry name" value="Helix hairpin bin"/>
    <property type="match status" value="1"/>
</dbReference>
<dbReference type="Gene3D" id="2.40.50.140">
    <property type="entry name" value="Nucleic acid-binding proteins"/>
    <property type="match status" value="1"/>
</dbReference>
<dbReference type="HAMAP" id="MF_01588">
    <property type="entry name" value="DNA_ligase_A"/>
    <property type="match status" value="1"/>
</dbReference>
<dbReference type="InterPro" id="IPR001357">
    <property type="entry name" value="BRCT_dom"/>
</dbReference>
<dbReference type="InterPro" id="IPR036420">
    <property type="entry name" value="BRCT_dom_sf"/>
</dbReference>
<dbReference type="InterPro" id="IPR041663">
    <property type="entry name" value="DisA/LigA_HHH"/>
</dbReference>
<dbReference type="InterPro" id="IPR001679">
    <property type="entry name" value="DNA_ligase"/>
</dbReference>
<dbReference type="InterPro" id="IPR018239">
    <property type="entry name" value="DNA_ligase_AS"/>
</dbReference>
<dbReference type="InterPro" id="IPR033136">
    <property type="entry name" value="DNA_ligase_CS"/>
</dbReference>
<dbReference type="InterPro" id="IPR013839">
    <property type="entry name" value="DNAligase_adenylation"/>
</dbReference>
<dbReference type="InterPro" id="IPR013840">
    <property type="entry name" value="DNAligase_N"/>
</dbReference>
<dbReference type="InterPro" id="IPR012340">
    <property type="entry name" value="NA-bd_OB-fold"/>
</dbReference>
<dbReference type="InterPro" id="IPR004150">
    <property type="entry name" value="NAD_DNA_ligase_OB"/>
</dbReference>
<dbReference type="InterPro" id="IPR010994">
    <property type="entry name" value="RuvA_2-like"/>
</dbReference>
<dbReference type="InterPro" id="IPR004149">
    <property type="entry name" value="Znf_DNAligase_C4"/>
</dbReference>
<dbReference type="NCBIfam" id="TIGR00575">
    <property type="entry name" value="dnlj"/>
    <property type="match status" value="1"/>
</dbReference>
<dbReference type="NCBIfam" id="NF005932">
    <property type="entry name" value="PRK07956.1"/>
    <property type="match status" value="1"/>
</dbReference>
<dbReference type="PANTHER" id="PTHR23389">
    <property type="entry name" value="CHROMOSOME TRANSMISSION FIDELITY FACTOR 18"/>
    <property type="match status" value="1"/>
</dbReference>
<dbReference type="PANTHER" id="PTHR23389:SF9">
    <property type="entry name" value="DNA LIGASE"/>
    <property type="match status" value="1"/>
</dbReference>
<dbReference type="Pfam" id="PF00533">
    <property type="entry name" value="BRCT"/>
    <property type="match status" value="1"/>
</dbReference>
<dbReference type="Pfam" id="PF01653">
    <property type="entry name" value="DNA_ligase_aden"/>
    <property type="match status" value="1"/>
</dbReference>
<dbReference type="Pfam" id="PF03120">
    <property type="entry name" value="DNA_ligase_OB"/>
    <property type="match status" value="1"/>
</dbReference>
<dbReference type="Pfam" id="PF03119">
    <property type="entry name" value="DNA_ligase_ZBD"/>
    <property type="match status" value="1"/>
</dbReference>
<dbReference type="Pfam" id="PF12826">
    <property type="entry name" value="HHH_2"/>
    <property type="match status" value="1"/>
</dbReference>
<dbReference type="PIRSF" id="PIRSF001604">
    <property type="entry name" value="LigA"/>
    <property type="match status" value="1"/>
</dbReference>
<dbReference type="SMART" id="SM00292">
    <property type="entry name" value="BRCT"/>
    <property type="match status" value="1"/>
</dbReference>
<dbReference type="SMART" id="SM00532">
    <property type="entry name" value="LIGANc"/>
    <property type="match status" value="1"/>
</dbReference>
<dbReference type="SUPFAM" id="SSF52113">
    <property type="entry name" value="BRCT domain"/>
    <property type="match status" value="1"/>
</dbReference>
<dbReference type="SUPFAM" id="SSF56091">
    <property type="entry name" value="DNA ligase/mRNA capping enzyme, catalytic domain"/>
    <property type="match status" value="1"/>
</dbReference>
<dbReference type="SUPFAM" id="SSF50249">
    <property type="entry name" value="Nucleic acid-binding proteins"/>
    <property type="match status" value="1"/>
</dbReference>
<dbReference type="SUPFAM" id="SSF47781">
    <property type="entry name" value="RuvA domain 2-like"/>
    <property type="match status" value="1"/>
</dbReference>
<dbReference type="PROSITE" id="PS50172">
    <property type="entry name" value="BRCT"/>
    <property type="match status" value="1"/>
</dbReference>
<dbReference type="PROSITE" id="PS01055">
    <property type="entry name" value="DNA_LIGASE_N1"/>
    <property type="match status" value="1"/>
</dbReference>
<dbReference type="PROSITE" id="PS01056">
    <property type="entry name" value="DNA_LIGASE_N2"/>
    <property type="match status" value="1"/>
</dbReference>
<sequence length="695" mass="75946">MDPSELTEPQAMVELERLAQQIRALDRAYYEDDAPTVTDAEYDALRQRNLAIEARFPDLRRADSPSLHVSGAPSAAFGRHRHLVPMLSLDNVFGREDFESFVTRAARFLGLNDDQARALRFVAEPKIDGLSISLTYEHGRFVRGTTRGDGTEGEDVTANLRTLRDVPLRLKGPAPALIEIRGEVFLSKPAFLSINAAQAEAGQKPFANPRNAAAGSLRQLDPNITARRPLSLFAYAQGFSSDRVADTHWDYLERLRQWGFTVNPLSCVVESAEAAEAFMDRIARERSGLEYDIDGVVYKVDDLALQDRLGFVGRAPRWAIAWKFPAEQAITRLTRIDIQVGRTGALTPVAILEPVNVGGVIVTRATLHNEDEIARKDVRVGDLVQIQRAGDVIPQILGVVPPGADAPPRGEAFIFPHTCPICGARAERPPGEVVWRCTGGLTCPAQVVERLIHFVSRDAFDIDGLGERTITEFHADGLLKTPADIFRLPDHEADIATREGWGTVSARNLTASVRARQTIPLARFIYALGIRRIGTSNARLLARHYGSYTHWREQMLRATTIGSDERLALGSITGIGGAIADELAAFFMEAHNLETLDDLTAMLTAIEDEDLPAQGHLSGKTVVFTGTLTTMTRPEAKAIAERLGARVTDSVSKKTDLVVLGADAGSKARKAAELGIDTLDEEGWRELAGIGPVGP</sequence>